<reference key="1">
    <citation type="journal article" date="2006" name="Proc. Natl. Acad. Sci. U.S.A.">
        <title>Identification of genes subject to positive selection in uropathogenic strains of Escherichia coli: a comparative genomics approach.</title>
        <authorList>
            <person name="Chen S.L."/>
            <person name="Hung C.-S."/>
            <person name="Xu J."/>
            <person name="Reigstad C.S."/>
            <person name="Magrini V."/>
            <person name="Sabo A."/>
            <person name="Blasiar D."/>
            <person name="Bieri T."/>
            <person name="Meyer R.R."/>
            <person name="Ozersky P."/>
            <person name="Armstrong J.R."/>
            <person name="Fulton R.S."/>
            <person name="Latreille J.P."/>
            <person name="Spieth J."/>
            <person name="Hooton T.M."/>
            <person name="Mardis E.R."/>
            <person name="Hultgren S.J."/>
            <person name="Gordon J.I."/>
        </authorList>
    </citation>
    <scope>NUCLEOTIDE SEQUENCE [LARGE SCALE GENOMIC DNA]</scope>
    <source>
        <strain>UTI89 / UPEC</strain>
    </source>
</reference>
<comment type="function">
    <text evidence="1">Component of the RavA-ViaA chaperone complex, which may act on the membrane to optimize the function of some of the respiratory chains. ViaA stimulates the ATPase activity of RavA.</text>
</comment>
<comment type="subunit">
    <text evidence="1">Homodimer. Interacts with RavA.</text>
</comment>
<comment type="subcellular location">
    <subcellularLocation>
        <location evidence="1">Cytoplasm</location>
    </subcellularLocation>
</comment>
<comment type="similarity">
    <text evidence="1">Belongs to the ViaA family.</text>
</comment>
<feature type="chain" id="PRO_1000069609" description="Regulatory protein ViaA">
    <location>
        <begin position="1"/>
        <end position="483"/>
    </location>
</feature>
<protein>
    <recommendedName>
        <fullName evidence="1">Regulatory protein ViaA</fullName>
    </recommendedName>
    <alternativeName>
        <fullName evidence="1">VWA interacting with AAA+ ATPase</fullName>
    </alternativeName>
</protein>
<name>VIAA_ECOUT</name>
<organism>
    <name type="scientific">Escherichia coli (strain UTI89 / UPEC)</name>
    <dbReference type="NCBI Taxonomy" id="364106"/>
    <lineage>
        <taxon>Bacteria</taxon>
        <taxon>Pseudomonadati</taxon>
        <taxon>Pseudomonadota</taxon>
        <taxon>Gammaproteobacteria</taxon>
        <taxon>Enterobacterales</taxon>
        <taxon>Enterobacteriaceae</taxon>
        <taxon>Escherichia</taxon>
    </lineage>
</organism>
<keyword id="KW-0143">Chaperone</keyword>
<keyword id="KW-0963">Cytoplasm</keyword>
<accession>Q1R4I7</accession>
<sequence>MLTLDTLNVMLAVSEEGLIEEMIIALLASPQLAVFFEKFPRLKAAITDDVPRWREALRSRLKDARVPPELTEEVMCYQQSQLLSTPQFIVQLPQILDLLHRLNSPWAEQARQLVDANSTITSALHTLFLQRWRLSLIVQATTLNQQLLEEEREQLLSEVQERMTLSGQLEPILADNNTAAGRLWDMSAGQLKRGDYQLIVKYGEFLNEQPELKRLAEQLGRSREAKSIPRNDAQMETFRTMVREPATVPEQVDGLQQSDDILRLLPPELATLGITELEYEFYRRLVEKQLLTYRLHGESWREKMIERPVVHKDYDEQPRGPFIVCVDTSGSMGGFNEQCAKAFCLALMRIALAENRRCYIMLFSTEIVRYELSGPQGIEQAIRFLSQQFRGGTDLASCFRAIMERLQSREWFDADAVVISDFIAQRLPDDVTSKVKELQRVHQHRFHAVAMSAHGKPGIMRIFDHIWRFDTGMRSRLLRRWRR</sequence>
<dbReference type="EMBL" id="CP000243">
    <property type="protein sequence ID" value="ABE09727.1"/>
    <property type="molecule type" value="Genomic_DNA"/>
</dbReference>
<dbReference type="RefSeq" id="WP_000956636.1">
    <property type="nucleotide sequence ID" value="NZ_CP064825.1"/>
</dbReference>
<dbReference type="SMR" id="Q1R4I7"/>
<dbReference type="KEGG" id="eci:UTI89_C4300"/>
<dbReference type="HOGENOM" id="CLU_022130_0_0_6"/>
<dbReference type="Proteomes" id="UP000001952">
    <property type="component" value="Chromosome"/>
</dbReference>
<dbReference type="GO" id="GO:0005829">
    <property type="term" value="C:cytosol"/>
    <property type="evidence" value="ECO:0007669"/>
    <property type="project" value="TreeGrafter"/>
</dbReference>
<dbReference type="CDD" id="cd01462">
    <property type="entry name" value="VWA_YIEM_type"/>
    <property type="match status" value="1"/>
</dbReference>
<dbReference type="Gene3D" id="3.40.50.410">
    <property type="entry name" value="von Willebrand factor, type A domain"/>
    <property type="match status" value="1"/>
</dbReference>
<dbReference type="HAMAP" id="MF_01626">
    <property type="entry name" value="ViaA"/>
    <property type="match status" value="1"/>
</dbReference>
<dbReference type="InterPro" id="IPR008912">
    <property type="entry name" value="Uncharacterised_CoxE"/>
</dbReference>
<dbReference type="InterPro" id="IPR023481">
    <property type="entry name" value="Uncharacterised_ViaA"/>
</dbReference>
<dbReference type="InterPro" id="IPR002035">
    <property type="entry name" value="VWF_A"/>
</dbReference>
<dbReference type="InterPro" id="IPR036465">
    <property type="entry name" value="vWFA_dom_sf"/>
</dbReference>
<dbReference type="NCBIfam" id="NF008230">
    <property type="entry name" value="PRK10997.1"/>
    <property type="match status" value="1"/>
</dbReference>
<dbReference type="PANTHER" id="PTHR36846">
    <property type="entry name" value="PROTEIN VIAA"/>
    <property type="match status" value="1"/>
</dbReference>
<dbReference type="PANTHER" id="PTHR36846:SF1">
    <property type="entry name" value="PROTEIN VIAA"/>
    <property type="match status" value="1"/>
</dbReference>
<dbReference type="Pfam" id="PF05762">
    <property type="entry name" value="VWA_CoxE"/>
    <property type="match status" value="1"/>
</dbReference>
<dbReference type="SMART" id="SM00327">
    <property type="entry name" value="VWA"/>
    <property type="match status" value="1"/>
</dbReference>
<dbReference type="SUPFAM" id="SSF53300">
    <property type="entry name" value="vWA-like"/>
    <property type="match status" value="1"/>
</dbReference>
<evidence type="ECO:0000255" key="1">
    <source>
        <dbReference type="HAMAP-Rule" id="MF_01626"/>
    </source>
</evidence>
<gene>
    <name evidence="1" type="primary">viaA</name>
    <name type="ordered locus">UTI89_C4300</name>
</gene>
<proteinExistence type="inferred from homology"/>